<name>CYSZ_HAEI8</name>
<comment type="function">
    <text evidence="1">High affinity, high specificity proton-dependent sulfate transporter, which mediates sulfate uptake. Provides the sulfur source for the cysteine synthesis pathway.</text>
</comment>
<comment type="subcellular location">
    <subcellularLocation>
        <location evidence="1">Cell inner membrane</location>
        <topology evidence="1">Multi-pass membrane protein</topology>
    </subcellularLocation>
</comment>
<comment type="similarity">
    <text evidence="1">Belongs to the CysZ family.</text>
</comment>
<gene>
    <name evidence="1" type="primary">cysZ</name>
    <name type="ordered locus">NTHI1268</name>
</gene>
<keyword id="KW-0028">Amino-acid biosynthesis</keyword>
<keyword id="KW-0997">Cell inner membrane</keyword>
<keyword id="KW-1003">Cell membrane</keyword>
<keyword id="KW-0198">Cysteine biosynthesis</keyword>
<keyword id="KW-0472">Membrane</keyword>
<keyword id="KW-0764">Sulfate transport</keyword>
<keyword id="KW-0812">Transmembrane</keyword>
<keyword id="KW-1133">Transmembrane helix</keyword>
<keyword id="KW-0813">Transport</keyword>
<reference key="1">
    <citation type="journal article" date="2005" name="J. Bacteriol.">
        <title>Genomic sequence of an otitis media isolate of nontypeable Haemophilus influenzae: comparative study with H. influenzae serotype d, strain KW20.</title>
        <authorList>
            <person name="Harrison A."/>
            <person name="Dyer D.W."/>
            <person name="Gillaspy A."/>
            <person name="Ray W.C."/>
            <person name="Mungur R."/>
            <person name="Carson M.B."/>
            <person name="Zhong H."/>
            <person name="Gipson J."/>
            <person name="Gipson M."/>
            <person name="Johnson L.S."/>
            <person name="Lewis L."/>
            <person name="Bakaletz L.O."/>
            <person name="Munson R.S. Jr."/>
        </authorList>
    </citation>
    <scope>NUCLEOTIDE SEQUENCE [LARGE SCALE GENOMIC DNA]</scope>
    <source>
        <strain>86-028NP</strain>
    </source>
</reference>
<feature type="chain" id="PRO_0000204341" description="Sulfate transporter CysZ">
    <location>
        <begin position="1"/>
        <end position="272"/>
    </location>
</feature>
<feature type="transmembrane region" description="Helical" evidence="1">
    <location>
        <begin position="29"/>
        <end position="49"/>
    </location>
</feature>
<feature type="transmembrane region" description="Helical" evidence="1">
    <location>
        <begin position="66"/>
        <end position="86"/>
    </location>
</feature>
<feature type="transmembrane region" description="Helical" evidence="1">
    <location>
        <begin position="148"/>
        <end position="168"/>
    </location>
</feature>
<feature type="transmembrane region" description="Helical" evidence="1">
    <location>
        <begin position="219"/>
        <end position="239"/>
    </location>
</feature>
<sequence>MLNLNELKSGFHYFVMGWHFITQKGLRRFVIIPILLNTILLCGLFWLFISQISSAIDWVMNFIPDWLSFLSVILLTLSILTILLLFYFTFTTFSGFIAAPFNGLLAEKVEKMLTEENINDDSLVDIMRDVPRMLAREWQKLRYSLPKIIALFLLSFIPLVGQTIVPVLTFLFTCWMMAIQYCDYPFDNHKVSFDIMKTALGNQRTQSLTFGGLVTCCTFVPVINLLIMPVAVCGATLMWVENYRNDLGFNMNRSFSSQTGLDVRSENTGIVK</sequence>
<evidence type="ECO:0000255" key="1">
    <source>
        <dbReference type="HAMAP-Rule" id="MF_00468"/>
    </source>
</evidence>
<protein>
    <recommendedName>
        <fullName evidence="1">Sulfate transporter CysZ</fullName>
    </recommendedName>
</protein>
<organism>
    <name type="scientific">Haemophilus influenzae (strain 86-028NP)</name>
    <dbReference type="NCBI Taxonomy" id="281310"/>
    <lineage>
        <taxon>Bacteria</taxon>
        <taxon>Pseudomonadati</taxon>
        <taxon>Pseudomonadota</taxon>
        <taxon>Gammaproteobacteria</taxon>
        <taxon>Pasteurellales</taxon>
        <taxon>Pasteurellaceae</taxon>
        <taxon>Haemophilus</taxon>
    </lineage>
</organism>
<accession>Q4QLI8</accession>
<dbReference type="EMBL" id="CP000057">
    <property type="protein sequence ID" value="AAX88109.1"/>
    <property type="molecule type" value="Genomic_DNA"/>
</dbReference>
<dbReference type="RefSeq" id="WP_011272386.1">
    <property type="nucleotide sequence ID" value="NC_007146.2"/>
</dbReference>
<dbReference type="SMR" id="Q4QLI8"/>
<dbReference type="KEGG" id="hit:NTHI1268"/>
<dbReference type="HOGENOM" id="CLU_070331_1_0_6"/>
<dbReference type="Proteomes" id="UP000002525">
    <property type="component" value="Chromosome"/>
</dbReference>
<dbReference type="GO" id="GO:0005886">
    <property type="term" value="C:plasma membrane"/>
    <property type="evidence" value="ECO:0007669"/>
    <property type="project" value="UniProtKB-SubCell"/>
</dbReference>
<dbReference type="GO" id="GO:0009675">
    <property type="term" value="F:high-affinity sulfate:proton symporter activity"/>
    <property type="evidence" value="ECO:0007669"/>
    <property type="project" value="TreeGrafter"/>
</dbReference>
<dbReference type="GO" id="GO:0019344">
    <property type="term" value="P:cysteine biosynthetic process"/>
    <property type="evidence" value="ECO:0007669"/>
    <property type="project" value="UniProtKB-UniRule"/>
</dbReference>
<dbReference type="GO" id="GO:0000103">
    <property type="term" value="P:sulfate assimilation"/>
    <property type="evidence" value="ECO:0007669"/>
    <property type="project" value="InterPro"/>
</dbReference>
<dbReference type="HAMAP" id="MF_00468">
    <property type="entry name" value="CysZ"/>
    <property type="match status" value="1"/>
</dbReference>
<dbReference type="InterPro" id="IPR050480">
    <property type="entry name" value="CysZ_sulfate_transptr"/>
</dbReference>
<dbReference type="InterPro" id="IPR022985">
    <property type="entry name" value="Sulfate_CysZ"/>
</dbReference>
<dbReference type="NCBIfam" id="NF003433">
    <property type="entry name" value="PRK04949.1"/>
    <property type="match status" value="1"/>
</dbReference>
<dbReference type="PANTHER" id="PTHR37468">
    <property type="entry name" value="SULFATE TRANSPORTER CYSZ"/>
    <property type="match status" value="1"/>
</dbReference>
<dbReference type="PANTHER" id="PTHR37468:SF1">
    <property type="entry name" value="SULFATE TRANSPORTER CYSZ"/>
    <property type="match status" value="1"/>
</dbReference>
<dbReference type="Pfam" id="PF07264">
    <property type="entry name" value="EI24"/>
    <property type="match status" value="1"/>
</dbReference>
<proteinExistence type="inferred from homology"/>